<organism>
    <name type="scientific">Helicobacter pylori (strain G27)</name>
    <dbReference type="NCBI Taxonomy" id="563041"/>
    <lineage>
        <taxon>Bacteria</taxon>
        <taxon>Pseudomonadati</taxon>
        <taxon>Campylobacterota</taxon>
        <taxon>Epsilonproteobacteria</taxon>
        <taxon>Campylobacterales</taxon>
        <taxon>Helicobacteraceae</taxon>
        <taxon>Helicobacter</taxon>
    </lineage>
</organism>
<accession>B5Z842</accession>
<sequence>MILVLDFGSQYTQLIARRLRESGIYTEIVPFFESIENIQKKAPKGLILSGGPASVYAKDAYKPSGKIFDLNVPILGICYGMQYLVDFFGGVVVGANEQEFGKAVLEIAQNSVIFEGVKIKSLVWMSHMDKVIELPKGFTTLAKSPNSPHCAIENGKIFGLQFHPEVVQSEEGGKILENFALLVCGCEKTWGMQHFAQREIARLKEKIANAKVLCAVSGGVDSTVVATLLHRAIKDNLIAVFVDHGLLRKNEKERVQAMFKDLQIPLNTIDAKGIFLSKLKGVSEPELKRKIIGETFIEVFEKEAKKHHLKGKIEFLAQGTLYPDVIESVSVKGPSKVIKTHHNVGGLPEWMDFKLIEPLRELFKDEARLLGKELGVSQDFLMHHPFPGPGLAVRILGEVSESKIKRLQEADFIFIEELKKANLYDKVWQAFCVLLNVNSVGVMGDNRTYENAICLRAVNASDGMTASFSFLEHSFLEKVSNRITNEVSGINRVVYDITSKPPGTIEWE</sequence>
<proteinExistence type="inferred from homology"/>
<gene>
    <name evidence="1" type="primary">guaA</name>
    <name type="ordered locus">HPG27_988</name>
</gene>
<protein>
    <recommendedName>
        <fullName evidence="1">GMP synthase [glutamine-hydrolyzing]</fullName>
        <ecNumber evidence="1">6.3.5.2</ecNumber>
    </recommendedName>
    <alternativeName>
        <fullName evidence="1">GMP synthetase</fullName>
    </alternativeName>
    <alternativeName>
        <fullName evidence="1">Glutamine amidotransferase</fullName>
    </alternativeName>
</protein>
<dbReference type="EC" id="6.3.5.2" evidence="1"/>
<dbReference type="EMBL" id="CP001173">
    <property type="protein sequence ID" value="ACI27741.1"/>
    <property type="molecule type" value="Genomic_DNA"/>
</dbReference>
<dbReference type="RefSeq" id="WP_000604708.1">
    <property type="nucleotide sequence ID" value="NC_011333.1"/>
</dbReference>
<dbReference type="SMR" id="B5Z842"/>
<dbReference type="KEGG" id="hpg:HPG27_988"/>
<dbReference type="HOGENOM" id="CLU_014340_0_5_7"/>
<dbReference type="UniPathway" id="UPA00189">
    <property type="reaction ID" value="UER00296"/>
</dbReference>
<dbReference type="Proteomes" id="UP000001735">
    <property type="component" value="Chromosome"/>
</dbReference>
<dbReference type="GO" id="GO:0005829">
    <property type="term" value="C:cytosol"/>
    <property type="evidence" value="ECO:0007669"/>
    <property type="project" value="TreeGrafter"/>
</dbReference>
<dbReference type="GO" id="GO:0005524">
    <property type="term" value="F:ATP binding"/>
    <property type="evidence" value="ECO:0007669"/>
    <property type="project" value="UniProtKB-UniRule"/>
</dbReference>
<dbReference type="GO" id="GO:0003921">
    <property type="term" value="F:GMP synthase activity"/>
    <property type="evidence" value="ECO:0007669"/>
    <property type="project" value="InterPro"/>
</dbReference>
<dbReference type="CDD" id="cd01742">
    <property type="entry name" value="GATase1_GMP_Synthase"/>
    <property type="match status" value="1"/>
</dbReference>
<dbReference type="CDD" id="cd01997">
    <property type="entry name" value="GMP_synthase_C"/>
    <property type="match status" value="1"/>
</dbReference>
<dbReference type="FunFam" id="3.30.300.10:FF:000002">
    <property type="entry name" value="GMP synthase [glutamine-hydrolyzing]"/>
    <property type="match status" value="1"/>
</dbReference>
<dbReference type="FunFam" id="3.40.50.620:FF:000001">
    <property type="entry name" value="GMP synthase [glutamine-hydrolyzing]"/>
    <property type="match status" value="1"/>
</dbReference>
<dbReference type="FunFam" id="3.40.50.880:FF:000001">
    <property type="entry name" value="GMP synthase [glutamine-hydrolyzing]"/>
    <property type="match status" value="1"/>
</dbReference>
<dbReference type="Gene3D" id="3.30.300.10">
    <property type="match status" value="1"/>
</dbReference>
<dbReference type="Gene3D" id="3.40.50.880">
    <property type="match status" value="1"/>
</dbReference>
<dbReference type="Gene3D" id="3.40.50.620">
    <property type="entry name" value="HUPs"/>
    <property type="match status" value="1"/>
</dbReference>
<dbReference type="HAMAP" id="MF_00344">
    <property type="entry name" value="GMP_synthase"/>
    <property type="match status" value="1"/>
</dbReference>
<dbReference type="InterPro" id="IPR029062">
    <property type="entry name" value="Class_I_gatase-like"/>
</dbReference>
<dbReference type="InterPro" id="IPR017926">
    <property type="entry name" value="GATASE"/>
</dbReference>
<dbReference type="InterPro" id="IPR001674">
    <property type="entry name" value="GMP_synth_C"/>
</dbReference>
<dbReference type="InterPro" id="IPR004739">
    <property type="entry name" value="GMP_synth_GATase"/>
</dbReference>
<dbReference type="InterPro" id="IPR022955">
    <property type="entry name" value="GMP_synthase"/>
</dbReference>
<dbReference type="InterPro" id="IPR025777">
    <property type="entry name" value="GMPS_ATP_PPase_dom"/>
</dbReference>
<dbReference type="InterPro" id="IPR022310">
    <property type="entry name" value="NAD/GMP_synthase"/>
</dbReference>
<dbReference type="InterPro" id="IPR014729">
    <property type="entry name" value="Rossmann-like_a/b/a_fold"/>
</dbReference>
<dbReference type="NCBIfam" id="TIGR00884">
    <property type="entry name" value="guaA_Cterm"/>
    <property type="match status" value="1"/>
</dbReference>
<dbReference type="NCBIfam" id="TIGR00888">
    <property type="entry name" value="guaA_Nterm"/>
    <property type="match status" value="1"/>
</dbReference>
<dbReference type="NCBIfam" id="NF000848">
    <property type="entry name" value="PRK00074.1"/>
    <property type="match status" value="1"/>
</dbReference>
<dbReference type="PANTHER" id="PTHR11922:SF2">
    <property type="entry name" value="GMP SYNTHASE [GLUTAMINE-HYDROLYZING]"/>
    <property type="match status" value="1"/>
</dbReference>
<dbReference type="PANTHER" id="PTHR11922">
    <property type="entry name" value="GMP SYNTHASE-RELATED"/>
    <property type="match status" value="1"/>
</dbReference>
<dbReference type="Pfam" id="PF00117">
    <property type="entry name" value="GATase"/>
    <property type="match status" value="1"/>
</dbReference>
<dbReference type="Pfam" id="PF00958">
    <property type="entry name" value="GMP_synt_C"/>
    <property type="match status" value="1"/>
</dbReference>
<dbReference type="Pfam" id="PF02540">
    <property type="entry name" value="NAD_synthase"/>
    <property type="match status" value="1"/>
</dbReference>
<dbReference type="PRINTS" id="PR00097">
    <property type="entry name" value="ANTSNTHASEII"/>
</dbReference>
<dbReference type="PRINTS" id="PR00096">
    <property type="entry name" value="GATASE"/>
</dbReference>
<dbReference type="SUPFAM" id="SSF52402">
    <property type="entry name" value="Adenine nucleotide alpha hydrolases-like"/>
    <property type="match status" value="1"/>
</dbReference>
<dbReference type="SUPFAM" id="SSF52317">
    <property type="entry name" value="Class I glutamine amidotransferase-like"/>
    <property type="match status" value="1"/>
</dbReference>
<dbReference type="SUPFAM" id="SSF54810">
    <property type="entry name" value="GMP synthetase C-terminal dimerisation domain"/>
    <property type="match status" value="1"/>
</dbReference>
<dbReference type="PROSITE" id="PS51273">
    <property type="entry name" value="GATASE_TYPE_1"/>
    <property type="match status" value="1"/>
</dbReference>
<dbReference type="PROSITE" id="PS51553">
    <property type="entry name" value="GMPS_ATP_PPASE"/>
    <property type="match status" value="1"/>
</dbReference>
<feature type="chain" id="PRO_1000120317" description="GMP synthase [glutamine-hydrolyzing]">
    <location>
        <begin position="1"/>
        <end position="508"/>
    </location>
</feature>
<feature type="domain" description="Glutamine amidotransferase type-1" evidence="1">
    <location>
        <begin position="1"/>
        <end position="189"/>
    </location>
</feature>
<feature type="domain" description="GMPS ATP-PPase" evidence="1">
    <location>
        <begin position="190"/>
        <end position="383"/>
    </location>
</feature>
<feature type="active site" description="Nucleophile" evidence="1">
    <location>
        <position position="78"/>
    </location>
</feature>
<feature type="active site" evidence="1">
    <location>
        <position position="163"/>
    </location>
</feature>
<feature type="active site" evidence="1">
    <location>
        <position position="165"/>
    </location>
</feature>
<feature type="binding site" evidence="1">
    <location>
        <begin position="217"/>
        <end position="223"/>
    </location>
    <ligand>
        <name>ATP</name>
        <dbReference type="ChEBI" id="CHEBI:30616"/>
    </ligand>
</feature>
<comment type="function">
    <text evidence="1">Catalyzes the synthesis of GMP from XMP.</text>
</comment>
<comment type="catalytic activity">
    <reaction evidence="1">
        <text>XMP + L-glutamine + ATP + H2O = GMP + L-glutamate + AMP + diphosphate + 2 H(+)</text>
        <dbReference type="Rhea" id="RHEA:11680"/>
        <dbReference type="ChEBI" id="CHEBI:15377"/>
        <dbReference type="ChEBI" id="CHEBI:15378"/>
        <dbReference type="ChEBI" id="CHEBI:29985"/>
        <dbReference type="ChEBI" id="CHEBI:30616"/>
        <dbReference type="ChEBI" id="CHEBI:33019"/>
        <dbReference type="ChEBI" id="CHEBI:57464"/>
        <dbReference type="ChEBI" id="CHEBI:58115"/>
        <dbReference type="ChEBI" id="CHEBI:58359"/>
        <dbReference type="ChEBI" id="CHEBI:456215"/>
        <dbReference type="EC" id="6.3.5.2"/>
    </reaction>
</comment>
<comment type="pathway">
    <text evidence="1">Purine metabolism; GMP biosynthesis; GMP from XMP (L-Gln route): step 1/1.</text>
</comment>
<comment type="subunit">
    <text evidence="1">Homodimer.</text>
</comment>
<name>GUAA_HELPG</name>
<reference key="1">
    <citation type="journal article" date="2009" name="J. Bacteriol.">
        <title>The complete genome sequence of Helicobacter pylori strain G27.</title>
        <authorList>
            <person name="Baltrus D.A."/>
            <person name="Amieva M.R."/>
            <person name="Covacci A."/>
            <person name="Lowe T.M."/>
            <person name="Merrell D.S."/>
            <person name="Ottemann K.M."/>
            <person name="Stein M."/>
            <person name="Salama N.R."/>
            <person name="Guillemin K."/>
        </authorList>
    </citation>
    <scope>NUCLEOTIDE SEQUENCE [LARGE SCALE GENOMIC DNA]</scope>
    <source>
        <strain>G27</strain>
    </source>
</reference>
<keyword id="KW-0067">ATP-binding</keyword>
<keyword id="KW-0315">Glutamine amidotransferase</keyword>
<keyword id="KW-0332">GMP biosynthesis</keyword>
<keyword id="KW-0436">Ligase</keyword>
<keyword id="KW-0547">Nucleotide-binding</keyword>
<keyword id="KW-0658">Purine biosynthesis</keyword>
<keyword id="KW-1185">Reference proteome</keyword>
<evidence type="ECO:0000255" key="1">
    <source>
        <dbReference type="HAMAP-Rule" id="MF_00344"/>
    </source>
</evidence>